<organism>
    <name type="scientific">Bacillus thuringiensis subsp. konkukian (strain 97-27)</name>
    <dbReference type="NCBI Taxonomy" id="281309"/>
    <lineage>
        <taxon>Bacteria</taxon>
        <taxon>Bacillati</taxon>
        <taxon>Bacillota</taxon>
        <taxon>Bacilli</taxon>
        <taxon>Bacillales</taxon>
        <taxon>Bacillaceae</taxon>
        <taxon>Bacillus</taxon>
        <taxon>Bacillus cereus group</taxon>
    </lineage>
</organism>
<proteinExistence type="inferred from homology"/>
<sequence>MSQFSFTKMHGLGNSYIYVNMFEEQIPEEDLALVAEKVSNINTGIGADGMILICPSDVAPVKMRMFNNDGSEGKSCGNGLRCVAKYAYEHKLVEDTVFTIETLAGIVTAEVTVEEGKVTLAKIDMGAPRLTRAEIPMLGEGETPFIRENFLYNNHRYAFTAVSMGNPHAVIFVDDVEQAPLTTLGPVLETHEMFPERVNVEFIEILNEEEMNFRVWERGSGVTQACGTGACAAVVASILNGKMERGKEITVHLAGGDLMIAWTEEGNVLMKGPAEVICHGVYEYKIEA</sequence>
<keyword id="KW-0028">Amino-acid biosynthesis</keyword>
<keyword id="KW-0963">Cytoplasm</keyword>
<keyword id="KW-0413">Isomerase</keyword>
<keyword id="KW-0457">Lysine biosynthesis</keyword>
<name>DAPF_BACHK</name>
<feature type="chain" id="PRO_1000011842" description="Diaminopimelate epimerase">
    <location>
        <begin position="1"/>
        <end position="288"/>
    </location>
</feature>
<feature type="active site" description="Proton donor" evidence="1">
    <location>
        <position position="76"/>
    </location>
</feature>
<feature type="active site" description="Proton acceptor" evidence="1">
    <location>
        <position position="226"/>
    </location>
</feature>
<feature type="binding site" evidence="1">
    <location>
        <position position="14"/>
    </location>
    <ligand>
        <name>substrate</name>
    </ligand>
</feature>
<feature type="binding site" evidence="1">
    <location>
        <position position="67"/>
    </location>
    <ligand>
        <name>substrate</name>
    </ligand>
</feature>
<feature type="binding site" evidence="1">
    <location>
        <begin position="77"/>
        <end position="78"/>
    </location>
    <ligand>
        <name>substrate</name>
    </ligand>
</feature>
<feature type="binding site" evidence="1">
    <location>
        <position position="166"/>
    </location>
    <ligand>
        <name>substrate</name>
    </ligand>
</feature>
<feature type="binding site" evidence="1">
    <location>
        <position position="199"/>
    </location>
    <ligand>
        <name>substrate</name>
    </ligand>
</feature>
<feature type="binding site" evidence="1">
    <location>
        <begin position="217"/>
        <end position="218"/>
    </location>
    <ligand>
        <name>substrate</name>
    </ligand>
</feature>
<feature type="binding site" evidence="1">
    <location>
        <begin position="227"/>
        <end position="228"/>
    </location>
    <ligand>
        <name>substrate</name>
    </ligand>
</feature>
<feature type="site" description="Could be important to modulate the pK values of the two catalytic cysteine residues" evidence="1">
    <location>
        <position position="168"/>
    </location>
</feature>
<feature type="site" description="Could be important to modulate the pK values of the two catalytic cysteine residues" evidence="1">
    <location>
        <position position="217"/>
    </location>
</feature>
<dbReference type="EC" id="5.1.1.7" evidence="1"/>
<dbReference type="EMBL" id="AE017355">
    <property type="protein sequence ID" value="AAT63208.1"/>
    <property type="molecule type" value="Genomic_DNA"/>
</dbReference>
<dbReference type="RefSeq" id="WP_000077385.1">
    <property type="nucleotide sequence ID" value="NC_005957.1"/>
</dbReference>
<dbReference type="RefSeq" id="YP_038958.1">
    <property type="nucleotide sequence ID" value="NC_005957.1"/>
</dbReference>
<dbReference type="SMR" id="Q6HBW8"/>
<dbReference type="KEGG" id="btk:BT9727_4647"/>
<dbReference type="PATRIC" id="fig|281309.8.peg.4945"/>
<dbReference type="HOGENOM" id="CLU_053306_3_0_9"/>
<dbReference type="UniPathway" id="UPA00034">
    <property type="reaction ID" value="UER00025"/>
</dbReference>
<dbReference type="Proteomes" id="UP000001301">
    <property type="component" value="Chromosome"/>
</dbReference>
<dbReference type="GO" id="GO:0005829">
    <property type="term" value="C:cytosol"/>
    <property type="evidence" value="ECO:0007669"/>
    <property type="project" value="TreeGrafter"/>
</dbReference>
<dbReference type="GO" id="GO:0008837">
    <property type="term" value="F:diaminopimelate epimerase activity"/>
    <property type="evidence" value="ECO:0007669"/>
    <property type="project" value="UniProtKB-UniRule"/>
</dbReference>
<dbReference type="GO" id="GO:0009089">
    <property type="term" value="P:lysine biosynthetic process via diaminopimelate"/>
    <property type="evidence" value="ECO:0007669"/>
    <property type="project" value="UniProtKB-UniRule"/>
</dbReference>
<dbReference type="FunFam" id="3.10.310.10:FF:000004">
    <property type="entry name" value="Diaminopimelate epimerase"/>
    <property type="match status" value="1"/>
</dbReference>
<dbReference type="FunFam" id="3.10.310.10:FF:000006">
    <property type="entry name" value="Diaminopimelate epimerase"/>
    <property type="match status" value="1"/>
</dbReference>
<dbReference type="Gene3D" id="3.10.310.10">
    <property type="entry name" value="Diaminopimelate Epimerase, Chain A, domain 1"/>
    <property type="match status" value="2"/>
</dbReference>
<dbReference type="HAMAP" id="MF_00197">
    <property type="entry name" value="DAP_epimerase"/>
    <property type="match status" value="1"/>
</dbReference>
<dbReference type="InterPro" id="IPR018510">
    <property type="entry name" value="DAP_epimerase_AS"/>
</dbReference>
<dbReference type="InterPro" id="IPR001653">
    <property type="entry name" value="DAP_epimerase_DapF"/>
</dbReference>
<dbReference type="NCBIfam" id="TIGR00652">
    <property type="entry name" value="DapF"/>
    <property type="match status" value="1"/>
</dbReference>
<dbReference type="PANTHER" id="PTHR31689:SF0">
    <property type="entry name" value="DIAMINOPIMELATE EPIMERASE"/>
    <property type="match status" value="1"/>
</dbReference>
<dbReference type="PANTHER" id="PTHR31689">
    <property type="entry name" value="DIAMINOPIMELATE EPIMERASE, CHLOROPLASTIC"/>
    <property type="match status" value="1"/>
</dbReference>
<dbReference type="Pfam" id="PF01678">
    <property type="entry name" value="DAP_epimerase"/>
    <property type="match status" value="2"/>
</dbReference>
<dbReference type="SUPFAM" id="SSF54506">
    <property type="entry name" value="Diaminopimelate epimerase-like"/>
    <property type="match status" value="1"/>
</dbReference>
<dbReference type="PROSITE" id="PS01326">
    <property type="entry name" value="DAP_EPIMERASE"/>
    <property type="match status" value="1"/>
</dbReference>
<evidence type="ECO:0000255" key="1">
    <source>
        <dbReference type="HAMAP-Rule" id="MF_00197"/>
    </source>
</evidence>
<reference key="1">
    <citation type="journal article" date="2006" name="J. Bacteriol.">
        <title>Pathogenomic sequence analysis of Bacillus cereus and Bacillus thuringiensis isolates closely related to Bacillus anthracis.</title>
        <authorList>
            <person name="Han C.S."/>
            <person name="Xie G."/>
            <person name="Challacombe J.F."/>
            <person name="Altherr M.R."/>
            <person name="Bhotika S.S."/>
            <person name="Bruce D."/>
            <person name="Campbell C.S."/>
            <person name="Campbell M.L."/>
            <person name="Chen J."/>
            <person name="Chertkov O."/>
            <person name="Cleland C."/>
            <person name="Dimitrijevic M."/>
            <person name="Doggett N.A."/>
            <person name="Fawcett J.J."/>
            <person name="Glavina T."/>
            <person name="Goodwin L.A."/>
            <person name="Hill K.K."/>
            <person name="Hitchcock P."/>
            <person name="Jackson P.J."/>
            <person name="Keim P."/>
            <person name="Kewalramani A.R."/>
            <person name="Longmire J."/>
            <person name="Lucas S."/>
            <person name="Malfatti S."/>
            <person name="McMurry K."/>
            <person name="Meincke L.J."/>
            <person name="Misra M."/>
            <person name="Moseman B.L."/>
            <person name="Mundt M."/>
            <person name="Munk A.C."/>
            <person name="Okinaka R.T."/>
            <person name="Parson-Quintana B."/>
            <person name="Reilly L.P."/>
            <person name="Richardson P."/>
            <person name="Robinson D.L."/>
            <person name="Rubin E."/>
            <person name="Saunders E."/>
            <person name="Tapia R."/>
            <person name="Tesmer J.G."/>
            <person name="Thayer N."/>
            <person name="Thompson L.S."/>
            <person name="Tice H."/>
            <person name="Ticknor L.O."/>
            <person name="Wills P.L."/>
            <person name="Brettin T.S."/>
            <person name="Gilna P."/>
        </authorList>
    </citation>
    <scope>NUCLEOTIDE SEQUENCE [LARGE SCALE GENOMIC DNA]</scope>
    <source>
        <strain>97-27</strain>
    </source>
</reference>
<protein>
    <recommendedName>
        <fullName evidence="1">Diaminopimelate epimerase</fullName>
        <shortName evidence="1">DAP epimerase</shortName>
        <ecNumber evidence="1">5.1.1.7</ecNumber>
    </recommendedName>
    <alternativeName>
        <fullName evidence="1">PLP-independent amino acid racemase</fullName>
    </alternativeName>
</protein>
<comment type="function">
    <text evidence="1">Catalyzes the stereoinversion of LL-2,6-diaminopimelate (L,L-DAP) to meso-diaminopimelate (meso-DAP), a precursor of L-lysine and an essential component of the bacterial peptidoglycan.</text>
</comment>
<comment type="catalytic activity">
    <reaction evidence="1">
        <text>(2S,6S)-2,6-diaminopimelate = meso-2,6-diaminopimelate</text>
        <dbReference type="Rhea" id="RHEA:15393"/>
        <dbReference type="ChEBI" id="CHEBI:57609"/>
        <dbReference type="ChEBI" id="CHEBI:57791"/>
        <dbReference type="EC" id="5.1.1.7"/>
    </reaction>
</comment>
<comment type="pathway">
    <text evidence="1">Amino-acid biosynthesis; L-lysine biosynthesis via DAP pathway; DL-2,6-diaminopimelate from LL-2,6-diaminopimelate: step 1/1.</text>
</comment>
<comment type="subunit">
    <text evidence="1">Homodimer.</text>
</comment>
<comment type="subcellular location">
    <subcellularLocation>
        <location evidence="1">Cytoplasm</location>
    </subcellularLocation>
</comment>
<comment type="similarity">
    <text evidence="1">Belongs to the diaminopimelate epimerase family.</text>
</comment>
<accession>Q6HBW8</accession>
<gene>
    <name evidence="1" type="primary">dapF</name>
    <name type="ordered locus">BT9727_4647</name>
</gene>